<proteinExistence type="evidence at transcript level"/>
<reference key="1">
    <citation type="submission" date="2004-11" db="EMBL/GenBank/DDBJ databases">
        <authorList>
            <consortium name="The German cDNA consortium"/>
        </authorList>
    </citation>
    <scope>NUCLEOTIDE SEQUENCE [LARGE SCALE MRNA]</scope>
    <source>
        <tissue>Heart</tissue>
    </source>
</reference>
<accession>Q5RAP0</accession>
<sequence length="929" mass="101757">MTASSVEQLRKEGNELFKCGDYGGALAAYTQALGLDATPQDQAVLHRNRAACYLKLEDYDKAETEASKAIEKDGGDVKALYRRSQALEKLGRLDQAVLDLQRCVSLEPKNKVFQEALRNIGGQIQEKVRYMSSTDAKVEQMFQILLDPEEKGTEKKQKASQNLVVLAREDAGAEKTLRSNGVQLLQRLLDTGETDLMLAALRTLVGICSEHQSRTVATLSILGTRRVVSILGVESQSVSLAACHLLQVMFDALKEGVKKGFRGKEGAIIVDPARELKVLISNLLDLLTEVGVSGQGRDNALTLLIKAVPRKSLKDPNNSLTLWVIDQGLKKILEVGGSLQDPPGELAVTANSRMSASILLSKLFDDLKCDAERENFHRLCENYIKSWFEGRGLAGKLRAIQTVSCLLQGPCDAGNRALELSGVMEGVIALCASEQEEEQLVAVEALIHAAGKAKRASFITANGVSLLKDLYKRSEKDSIRIRALVGLCKLGSAGGTDFSMKQFAEGSTLKLAKQCRKWLCNDQIDAGTRRWAVEGLAYLTFDADVKEEFVEDAAALKALFQLSRSEERSVLFAVASALVNCTNSYDYEEPDPKMVELAKYAKQHVPEQHPKDKPSFVRARVKKLLAAGVVSAMVYMVKTESPVLTSSCRELLSRIFLALVEEVEDRGTVVAQGGGRALIPLALEGTDVGQTKAAQALAKLTITSNPEMTFPGERIYEVVRPLVSLLHLNCSGLQNFEALMALTNLAGISERLRQKILKEKAVPMIEGYMFEEHEMIRRASTECMCNLAMSKEVQDLFEAEGNDRLKLLVLYSGEDDELLQRAAAGGLAMLTSMRPTLCSRIPQVTTHWLEILQALLLSSNQELQHRGAVVVLNMVEASREIASTLMESEMMEILSVLAKGDHSPVTRAAAACLDKAVEYGLIQPNQDGE</sequence>
<protein>
    <recommendedName>
        <fullName>Protein unc-45 homolog A</fullName>
        <shortName>Unc-45A</shortName>
    </recommendedName>
    <alternativeName>
        <fullName>Smooth muscle cell-associated protein 1</fullName>
        <shortName>SMAP-1</shortName>
    </alternativeName>
</protein>
<gene>
    <name type="primary">UNC45A</name>
    <name type="synonym">SMAP1</name>
</gene>
<evidence type="ECO:0000250" key="1"/>
<evidence type="ECO:0000250" key="2">
    <source>
        <dbReference type="UniProtKB" id="Q9H3U1"/>
    </source>
</evidence>
<evidence type="ECO:0000305" key="3"/>
<dbReference type="EMBL" id="CR858975">
    <property type="protein sequence ID" value="CAH91170.1"/>
    <property type="molecule type" value="mRNA"/>
</dbReference>
<dbReference type="RefSeq" id="NP_001127383.1">
    <property type="nucleotide sequence ID" value="NM_001133911.1"/>
</dbReference>
<dbReference type="BMRB" id="Q5RAP0"/>
<dbReference type="SMR" id="Q5RAP0"/>
<dbReference type="FunCoup" id="Q5RAP0">
    <property type="interactions" value="4030"/>
</dbReference>
<dbReference type="STRING" id="9601.ENSPPYP00000007701"/>
<dbReference type="GeneID" id="100174449"/>
<dbReference type="KEGG" id="pon:100174449"/>
<dbReference type="CTD" id="55898"/>
<dbReference type="eggNOG" id="KOG4151">
    <property type="taxonomic scope" value="Eukaryota"/>
</dbReference>
<dbReference type="InParanoid" id="Q5RAP0"/>
<dbReference type="OrthoDB" id="199930at2759"/>
<dbReference type="Proteomes" id="UP000001595">
    <property type="component" value="Unplaced"/>
</dbReference>
<dbReference type="GO" id="GO:0005634">
    <property type="term" value="C:nucleus"/>
    <property type="evidence" value="ECO:0007669"/>
    <property type="project" value="UniProtKB-SubCell"/>
</dbReference>
<dbReference type="GO" id="GO:0048471">
    <property type="term" value="C:perinuclear region of cytoplasm"/>
    <property type="evidence" value="ECO:0007669"/>
    <property type="project" value="UniProtKB-SubCell"/>
</dbReference>
<dbReference type="GO" id="GO:0051879">
    <property type="term" value="F:Hsp90 protein binding"/>
    <property type="evidence" value="ECO:0007669"/>
    <property type="project" value="TreeGrafter"/>
</dbReference>
<dbReference type="GO" id="GO:0030154">
    <property type="term" value="P:cell differentiation"/>
    <property type="evidence" value="ECO:0007669"/>
    <property type="project" value="UniProtKB-KW"/>
</dbReference>
<dbReference type="GO" id="GO:0061077">
    <property type="term" value="P:chaperone-mediated protein folding"/>
    <property type="evidence" value="ECO:0007669"/>
    <property type="project" value="TreeGrafter"/>
</dbReference>
<dbReference type="GO" id="GO:0007517">
    <property type="term" value="P:muscle organ development"/>
    <property type="evidence" value="ECO:0007669"/>
    <property type="project" value="UniProtKB-KW"/>
</dbReference>
<dbReference type="FunFam" id="1.25.10.10:FF:000087">
    <property type="entry name" value="Unc-45 myosin chaperone A"/>
    <property type="match status" value="1"/>
</dbReference>
<dbReference type="FunFam" id="1.25.10.10:FF:000043">
    <property type="entry name" value="Unc-45 myosin chaperone B"/>
    <property type="match status" value="1"/>
</dbReference>
<dbReference type="FunFam" id="1.25.40.10:FF:000025">
    <property type="entry name" value="Unc-45 myosin chaperone B"/>
    <property type="match status" value="1"/>
</dbReference>
<dbReference type="Gene3D" id="1.25.10.10">
    <property type="entry name" value="Leucine-rich Repeat Variant"/>
    <property type="match status" value="2"/>
</dbReference>
<dbReference type="Gene3D" id="1.25.40.10">
    <property type="entry name" value="Tetratricopeptide repeat domain"/>
    <property type="match status" value="1"/>
</dbReference>
<dbReference type="InterPro" id="IPR011989">
    <property type="entry name" value="ARM-like"/>
</dbReference>
<dbReference type="InterPro" id="IPR016024">
    <property type="entry name" value="ARM-type_fold"/>
</dbReference>
<dbReference type="InterPro" id="IPR011990">
    <property type="entry name" value="TPR-like_helical_dom_sf"/>
</dbReference>
<dbReference type="InterPro" id="IPR019734">
    <property type="entry name" value="TPR_rpt"/>
</dbReference>
<dbReference type="InterPro" id="IPR024660">
    <property type="entry name" value="UCS_central_dom"/>
</dbReference>
<dbReference type="PANTHER" id="PTHR45994">
    <property type="entry name" value="FI21225P1"/>
    <property type="match status" value="1"/>
</dbReference>
<dbReference type="PANTHER" id="PTHR45994:SF3">
    <property type="entry name" value="PROTEIN UNC-45 HOMOLOG A"/>
    <property type="match status" value="1"/>
</dbReference>
<dbReference type="Pfam" id="PF13181">
    <property type="entry name" value="TPR_8"/>
    <property type="match status" value="1"/>
</dbReference>
<dbReference type="Pfam" id="PF11701">
    <property type="entry name" value="UNC45-central"/>
    <property type="match status" value="1"/>
</dbReference>
<dbReference type="SMART" id="SM00028">
    <property type="entry name" value="TPR"/>
    <property type="match status" value="3"/>
</dbReference>
<dbReference type="SUPFAM" id="SSF48371">
    <property type="entry name" value="ARM repeat"/>
    <property type="match status" value="2"/>
</dbReference>
<dbReference type="SUPFAM" id="SSF48452">
    <property type="entry name" value="TPR-like"/>
    <property type="match status" value="1"/>
</dbReference>
<dbReference type="PROSITE" id="PS50005">
    <property type="entry name" value="TPR"/>
    <property type="match status" value="3"/>
</dbReference>
<dbReference type="PROSITE" id="PS50293">
    <property type="entry name" value="TPR_REGION"/>
    <property type="match status" value="1"/>
</dbReference>
<comment type="function">
    <text evidence="1 3">May act as co-chaperone for HSP90 (Potential). Prevents the stimulation of HSP90AB1 ATPase activity by AHSA1. Positive factor in promoting PGR function in the cell (By similarity). May be necessary for proper folding of myosin (Potential). Necessary for normal cell proliferation. Necessary for normal myotube formation and myosin accumulation during muscle cell development. May play a role in erythropoiesis in stroma cells in the spleen (By similarity).</text>
</comment>
<comment type="subunit">
    <text evidence="1">Interacts with PGR isoforms A and B as well as with NR3C1 in the absence of ligand, and with HSP90AB1. Binding to HSP90AB1 involves 2 UNC45A monomers per HSP90AB1 dimer (By similarity).</text>
</comment>
<comment type="subcellular location">
    <subcellularLocation>
        <location evidence="1">Cytoplasm</location>
    </subcellularLocation>
    <subcellularLocation>
        <location evidence="1">Cytoplasm</location>
        <location evidence="1">Perinuclear region</location>
    </subcellularLocation>
    <subcellularLocation>
        <location evidence="1">Nucleus</location>
    </subcellularLocation>
    <text evidence="1">Predominant in the perinuclear region. Little protein in the nucleus (By similarity).</text>
</comment>
<feature type="chain" id="PRO_0000249890" description="Protein unc-45 homolog A">
    <location>
        <begin position="1"/>
        <end position="929"/>
    </location>
</feature>
<feature type="repeat" description="TPR 1">
    <location>
        <begin position="6"/>
        <end position="39"/>
    </location>
</feature>
<feature type="repeat" description="TPR 2">
    <location>
        <begin position="43"/>
        <end position="76"/>
    </location>
</feature>
<feature type="repeat" description="TPR 3">
    <location>
        <begin position="77"/>
        <end position="110"/>
    </location>
</feature>
<feature type="modified residue" description="N6-acetyllysine" evidence="2">
    <location>
        <position position="55"/>
    </location>
</feature>
<feature type="modified residue" description="N6-acetyllysine" evidence="2">
    <location>
        <position position="468"/>
    </location>
</feature>
<keyword id="KW-0007">Acetylation</keyword>
<keyword id="KW-0143">Chaperone</keyword>
<keyword id="KW-0963">Cytoplasm</keyword>
<keyword id="KW-0217">Developmental protein</keyword>
<keyword id="KW-0221">Differentiation</keyword>
<keyword id="KW-0517">Myogenesis</keyword>
<keyword id="KW-0539">Nucleus</keyword>
<keyword id="KW-1185">Reference proteome</keyword>
<keyword id="KW-0677">Repeat</keyword>
<keyword id="KW-0802">TPR repeat</keyword>
<name>UN45A_PONAB</name>
<organism>
    <name type="scientific">Pongo abelii</name>
    <name type="common">Sumatran orangutan</name>
    <name type="synonym">Pongo pygmaeus abelii</name>
    <dbReference type="NCBI Taxonomy" id="9601"/>
    <lineage>
        <taxon>Eukaryota</taxon>
        <taxon>Metazoa</taxon>
        <taxon>Chordata</taxon>
        <taxon>Craniata</taxon>
        <taxon>Vertebrata</taxon>
        <taxon>Euteleostomi</taxon>
        <taxon>Mammalia</taxon>
        <taxon>Eutheria</taxon>
        <taxon>Euarchontoglires</taxon>
        <taxon>Primates</taxon>
        <taxon>Haplorrhini</taxon>
        <taxon>Catarrhini</taxon>
        <taxon>Hominidae</taxon>
        <taxon>Pongo</taxon>
    </lineage>
</organism>